<proteinExistence type="inferred from homology"/>
<feature type="signal peptide" evidence="1">
    <location>
        <begin position="1"/>
        <end position="20"/>
    </location>
</feature>
<feature type="chain" id="PRO_0000270024" description="Chaperone SurA">
    <location>
        <begin position="21"/>
        <end position="433"/>
    </location>
</feature>
<feature type="domain" description="PpiC 1" evidence="1">
    <location>
        <begin position="171"/>
        <end position="272"/>
    </location>
</feature>
<feature type="domain" description="PpiC 2" evidence="1">
    <location>
        <begin position="282"/>
        <end position="382"/>
    </location>
</feature>
<sequence>MKNWRTLIFGLMFSVSTAFAAPQQMDKIAAVVNNGVVLESDINNRLQSVKRDAQHAGQQIPDEQTLRHQILERLIIDNILLQMAKQMGITIPDQALDSTIANIAAQNHITVDQMKHRIAADGMNFDTYRDQIRKEMLIAEVRNNEVRRRVTILPQEIDALVKQISNQNTNDTELNISHILIPLPENPDQAQMEKAMTVVQKIMSELKHGVDFGKLAIAYSADPQALKGGNMGWSRLQELPTLFAEQLQLAQKGAVVGPIRSGVGFHILKVNDIRGGNPTIAVTEVHARHILLRTSPVMTDDQARTKLQQIASDIRSGKTDFADAAKEFSDDPGSALRGGDLGWTAPDIYDPAFRDALMRLNKGEISQPVHSSFGWHLIQLLDTRKVDKTDVAQKDRAYRMLFNRKFTEEAQSWMQEQRASAYVKILDGNDAQQ</sequence>
<gene>
    <name evidence="1" type="primary">surA</name>
    <name type="ordered locus">plu0611</name>
</gene>
<accession>Q7N8V5</accession>
<dbReference type="EC" id="5.2.1.8" evidence="1"/>
<dbReference type="EMBL" id="BX571860">
    <property type="protein sequence ID" value="CAE12906.1"/>
    <property type="molecule type" value="Genomic_DNA"/>
</dbReference>
<dbReference type="RefSeq" id="WP_011144988.1">
    <property type="nucleotide sequence ID" value="NC_005126.1"/>
</dbReference>
<dbReference type="SMR" id="Q7N8V5"/>
<dbReference type="STRING" id="243265.plu0611"/>
<dbReference type="GeneID" id="48846898"/>
<dbReference type="KEGG" id="plu:plu0611"/>
<dbReference type="eggNOG" id="COG0760">
    <property type="taxonomic scope" value="Bacteria"/>
</dbReference>
<dbReference type="HOGENOM" id="CLU_034646_11_0_6"/>
<dbReference type="OrthoDB" id="14196at2"/>
<dbReference type="Proteomes" id="UP000002514">
    <property type="component" value="Chromosome"/>
</dbReference>
<dbReference type="GO" id="GO:0030288">
    <property type="term" value="C:outer membrane-bounded periplasmic space"/>
    <property type="evidence" value="ECO:0007669"/>
    <property type="project" value="InterPro"/>
</dbReference>
<dbReference type="GO" id="GO:0042277">
    <property type="term" value="F:peptide binding"/>
    <property type="evidence" value="ECO:0007669"/>
    <property type="project" value="InterPro"/>
</dbReference>
<dbReference type="GO" id="GO:0003755">
    <property type="term" value="F:peptidyl-prolyl cis-trans isomerase activity"/>
    <property type="evidence" value="ECO:0007669"/>
    <property type="project" value="UniProtKB-UniRule"/>
</dbReference>
<dbReference type="GO" id="GO:0051082">
    <property type="term" value="F:unfolded protein binding"/>
    <property type="evidence" value="ECO:0007669"/>
    <property type="project" value="UniProtKB-UniRule"/>
</dbReference>
<dbReference type="GO" id="GO:0043165">
    <property type="term" value="P:Gram-negative-bacterium-type cell outer membrane assembly"/>
    <property type="evidence" value="ECO:0007669"/>
    <property type="project" value="InterPro"/>
</dbReference>
<dbReference type="GO" id="GO:0006457">
    <property type="term" value="P:protein folding"/>
    <property type="evidence" value="ECO:0007669"/>
    <property type="project" value="UniProtKB-UniRule"/>
</dbReference>
<dbReference type="GO" id="GO:0050821">
    <property type="term" value="P:protein stabilization"/>
    <property type="evidence" value="ECO:0007669"/>
    <property type="project" value="InterPro"/>
</dbReference>
<dbReference type="Gene3D" id="3.10.50.40">
    <property type="match status" value="2"/>
</dbReference>
<dbReference type="Gene3D" id="1.10.4030.10">
    <property type="entry name" value="Porin chaperone SurA, peptide-binding domain"/>
    <property type="match status" value="2"/>
</dbReference>
<dbReference type="HAMAP" id="MF_01183">
    <property type="entry name" value="Chaperone_SurA"/>
    <property type="match status" value="1"/>
</dbReference>
<dbReference type="InterPro" id="IPR050280">
    <property type="entry name" value="OMP_Chaperone_SurA"/>
</dbReference>
<dbReference type="InterPro" id="IPR046357">
    <property type="entry name" value="PPIase_dom_sf"/>
</dbReference>
<dbReference type="InterPro" id="IPR000297">
    <property type="entry name" value="PPIase_PpiC"/>
</dbReference>
<dbReference type="InterPro" id="IPR023058">
    <property type="entry name" value="PPIase_PpiC_CS"/>
</dbReference>
<dbReference type="InterPro" id="IPR023034">
    <property type="entry name" value="PPIase_SurA"/>
</dbReference>
<dbReference type="InterPro" id="IPR015391">
    <property type="entry name" value="SurA_N"/>
</dbReference>
<dbReference type="InterPro" id="IPR027304">
    <property type="entry name" value="Trigger_fact/SurA_dom_sf"/>
</dbReference>
<dbReference type="NCBIfam" id="NF008038">
    <property type="entry name" value="PRK10770.1"/>
    <property type="match status" value="1"/>
</dbReference>
<dbReference type="PANTHER" id="PTHR47637">
    <property type="entry name" value="CHAPERONE SURA"/>
    <property type="match status" value="1"/>
</dbReference>
<dbReference type="PANTHER" id="PTHR47637:SF1">
    <property type="entry name" value="CHAPERONE SURA"/>
    <property type="match status" value="1"/>
</dbReference>
<dbReference type="Pfam" id="PF00639">
    <property type="entry name" value="Rotamase"/>
    <property type="match status" value="1"/>
</dbReference>
<dbReference type="Pfam" id="PF13616">
    <property type="entry name" value="Rotamase_3"/>
    <property type="match status" value="1"/>
</dbReference>
<dbReference type="Pfam" id="PF09312">
    <property type="entry name" value="SurA_N"/>
    <property type="match status" value="1"/>
</dbReference>
<dbReference type="SUPFAM" id="SSF54534">
    <property type="entry name" value="FKBP-like"/>
    <property type="match status" value="2"/>
</dbReference>
<dbReference type="SUPFAM" id="SSF109998">
    <property type="entry name" value="Triger factor/SurA peptide-binding domain-like"/>
    <property type="match status" value="1"/>
</dbReference>
<dbReference type="PROSITE" id="PS01096">
    <property type="entry name" value="PPIC_PPIASE_1"/>
    <property type="match status" value="2"/>
</dbReference>
<dbReference type="PROSITE" id="PS50198">
    <property type="entry name" value="PPIC_PPIASE_2"/>
    <property type="match status" value="2"/>
</dbReference>
<organism>
    <name type="scientific">Photorhabdus laumondii subsp. laumondii (strain DSM 15139 / CIP 105565 / TT01)</name>
    <name type="common">Photorhabdus luminescens subsp. laumondii</name>
    <dbReference type="NCBI Taxonomy" id="243265"/>
    <lineage>
        <taxon>Bacteria</taxon>
        <taxon>Pseudomonadati</taxon>
        <taxon>Pseudomonadota</taxon>
        <taxon>Gammaproteobacteria</taxon>
        <taxon>Enterobacterales</taxon>
        <taxon>Morganellaceae</taxon>
        <taxon>Photorhabdus</taxon>
    </lineage>
</organism>
<evidence type="ECO:0000255" key="1">
    <source>
        <dbReference type="HAMAP-Rule" id="MF_01183"/>
    </source>
</evidence>
<comment type="function">
    <text evidence="1">Chaperone involved in the correct folding and assembly of outer membrane proteins. Recognizes specific patterns of aromatic residues and the orientation of their side chains, which are found more frequently in integral outer membrane proteins. May act in both early periplasmic and late outer membrane-associated steps of protein maturation.</text>
</comment>
<comment type="catalytic activity">
    <reaction evidence="1">
        <text>[protein]-peptidylproline (omega=180) = [protein]-peptidylproline (omega=0)</text>
        <dbReference type="Rhea" id="RHEA:16237"/>
        <dbReference type="Rhea" id="RHEA-COMP:10747"/>
        <dbReference type="Rhea" id="RHEA-COMP:10748"/>
        <dbReference type="ChEBI" id="CHEBI:83833"/>
        <dbReference type="ChEBI" id="CHEBI:83834"/>
        <dbReference type="EC" id="5.2.1.8"/>
    </reaction>
</comment>
<comment type="subcellular location">
    <subcellularLocation>
        <location evidence="1">Periplasm</location>
    </subcellularLocation>
    <text evidence="1">Is capable of associating with the outer membrane.</text>
</comment>
<comment type="domain">
    <text evidence="1">The PPIase activity resides only in the second parvulin domain. The N-terminal region and the C-terminal tail are necessary and sufficient for the chaperone activity of SurA. The PPIase activity is dispensable for SurA to function as a chaperone. The N-terminal region and the C-terminal tail are also required for porin recognition.</text>
</comment>
<keyword id="KW-0143">Chaperone</keyword>
<keyword id="KW-0413">Isomerase</keyword>
<keyword id="KW-0574">Periplasm</keyword>
<keyword id="KW-1185">Reference proteome</keyword>
<keyword id="KW-0677">Repeat</keyword>
<keyword id="KW-0697">Rotamase</keyword>
<keyword id="KW-0732">Signal</keyword>
<protein>
    <recommendedName>
        <fullName evidence="1">Chaperone SurA</fullName>
    </recommendedName>
    <alternativeName>
        <fullName evidence="1">Peptidyl-prolyl cis-trans isomerase SurA</fullName>
        <shortName evidence="1">PPIase SurA</shortName>
        <ecNumber evidence="1">5.2.1.8</ecNumber>
    </alternativeName>
    <alternativeName>
        <fullName evidence="1">Rotamase SurA</fullName>
    </alternativeName>
</protein>
<name>SURA_PHOLL</name>
<reference key="1">
    <citation type="journal article" date="2003" name="Nat. Biotechnol.">
        <title>The genome sequence of the entomopathogenic bacterium Photorhabdus luminescens.</title>
        <authorList>
            <person name="Duchaud E."/>
            <person name="Rusniok C."/>
            <person name="Frangeul L."/>
            <person name="Buchrieser C."/>
            <person name="Givaudan A."/>
            <person name="Taourit S."/>
            <person name="Bocs S."/>
            <person name="Boursaux-Eude C."/>
            <person name="Chandler M."/>
            <person name="Charles J.-F."/>
            <person name="Dassa E."/>
            <person name="Derose R."/>
            <person name="Derzelle S."/>
            <person name="Freyssinet G."/>
            <person name="Gaudriault S."/>
            <person name="Medigue C."/>
            <person name="Lanois A."/>
            <person name="Powell K."/>
            <person name="Siguier P."/>
            <person name="Vincent R."/>
            <person name="Wingate V."/>
            <person name="Zouine M."/>
            <person name="Glaser P."/>
            <person name="Boemare N."/>
            <person name="Danchin A."/>
            <person name="Kunst F."/>
        </authorList>
    </citation>
    <scope>NUCLEOTIDE SEQUENCE [LARGE SCALE GENOMIC DNA]</scope>
    <source>
        <strain>DSM 15139 / CIP 105565 / TT01</strain>
    </source>
</reference>